<name>EFP_PETMO</name>
<dbReference type="EMBL" id="CP000879">
    <property type="protein sequence ID" value="ABX30760.1"/>
    <property type="molecule type" value="Genomic_DNA"/>
</dbReference>
<dbReference type="RefSeq" id="WP_012207867.1">
    <property type="nucleotide sequence ID" value="NC_010003.1"/>
</dbReference>
<dbReference type="SMR" id="A9BEN2"/>
<dbReference type="STRING" id="403833.Pmob_0011"/>
<dbReference type="KEGG" id="pmo:Pmob_0011"/>
<dbReference type="eggNOG" id="COG0231">
    <property type="taxonomic scope" value="Bacteria"/>
</dbReference>
<dbReference type="HOGENOM" id="CLU_074944_0_1_0"/>
<dbReference type="OrthoDB" id="9801844at2"/>
<dbReference type="UniPathway" id="UPA00345"/>
<dbReference type="Proteomes" id="UP000000789">
    <property type="component" value="Chromosome"/>
</dbReference>
<dbReference type="GO" id="GO:0005737">
    <property type="term" value="C:cytoplasm"/>
    <property type="evidence" value="ECO:0007669"/>
    <property type="project" value="UniProtKB-SubCell"/>
</dbReference>
<dbReference type="GO" id="GO:0003746">
    <property type="term" value="F:translation elongation factor activity"/>
    <property type="evidence" value="ECO:0007669"/>
    <property type="project" value="UniProtKB-UniRule"/>
</dbReference>
<dbReference type="GO" id="GO:0043043">
    <property type="term" value="P:peptide biosynthetic process"/>
    <property type="evidence" value="ECO:0007669"/>
    <property type="project" value="InterPro"/>
</dbReference>
<dbReference type="CDD" id="cd04470">
    <property type="entry name" value="S1_EF-P_repeat_1"/>
    <property type="match status" value="1"/>
</dbReference>
<dbReference type="CDD" id="cd05794">
    <property type="entry name" value="S1_EF-P_repeat_2"/>
    <property type="match status" value="1"/>
</dbReference>
<dbReference type="FunFam" id="2.40.50.140:FF:000004">
    <property type="entry name" value="Elongation factor P"/>
    <property type="match status" value="1"/>
</dbReference>
<dbReference type="FunFam" id="2.40.50.140:FF:000009">
    <property type="entry name" value="Elongation factor P"/>
    <property type="match status" value="1"/>
</dbReference>
<dbReference type="Gene3D" id="2.30.30.30">
    <property type="match status" value="1"/>
</dbReference>
<dbReference type="Gene3D" id="2.40.50.140">
    <property type="entry name" value="Nucleic acid-binding proteins"/>
    <property type="match status" value="2"/>
</dbReference>
<dbReference type="HAMAP" id="MF_00141">
    <property type="entry name" value="EF_P"/>
    <property type="match status" value="1"/>
</dbReference>
<dbReference type="InterPro" id="IPR015365">
    <property type="entry name" value="Elong-fact-P_C"/>
</dbReference>
<dbReference type="InterPro" id="IPR012340">
    <property type="entry name" value="NA-bd_OB-fold"/>
</dbReference>
<dbReference type="InterPro" id="IPR014722">
    <property type="entry name" value="Rib_uL2_dom2"/>
</dbReference>
<dbReference type="InterPro" id="IPR020599">
    <property type="entry name" value="Transl_elong_fac_P/YeiP"/>
</dbReference>
<dbReference type="InterPro" id="IPR013185">
    <property type="entry name" value="Transl_elong_KOW-like"/>
</dbReference>
<dbReference type="InterPro" id="IPR001059">
    <property type="entry name" value="Transl_elong_P/YeiP_cen"/>
</dbReference>
<dbReference type="InterPro" id="IPR013852">
    <property type="entry name" value="Transl_elong_P/YeiP_CS"/>
</dbReference>
<dbReference type="InterPro" id="IPR011768">
    <property type="entry name" value="Transl_elongation_fac_P"/>
</dbReference>
<dbReference type="InterPro" id="IPR008991">
    <property type="entry name" value="Translation_prot_SH3-like_sf"/>
</dbReference>
<dbReference type="NCBIfam" id="TIGR00038">
    <property type="entry name" value="efp"/>
    <property type="match status" value="1"/>
</dbReference>
<dbReference type="NCBIfam" id="NF001810">
    <property type="entry name" value="PRK00529.1"/>
    <property type="match status" value="1"/>
</dbReference>
<dbReference type="PANTHER" id="PTHR30053">
    <property type="entry name" value="ELONGATION FACTOR P"/>
    <property type="match status" value="1"/>
</dbReference>
<dbReference type="PANTHER" id="PTHR30053:SF12">
    <property type="entry name" value="ELONGATION FACTOR P (EF-P) FAMILY PROTEIN"/>
    <property type="match status" value="1"/>
</dbReference>
<dbReference type="Pfam" id="PF01132">
    <property type="entry name" value="EFP"/>
    <property type="match status" value="1"/>
</dbReference>
<dbReference type="Pfam" id="PF08207">
    <property type="entry name" value="EFP_N"/>
    <property type="match status" value="1"/>
</dbReference>
<dbReference type="Pfam" id="PF09285">
    <property type="entry name" value="Elong-fact-P_C"/>
    <property type="match status" value="1"/>
</dbReference>
<dbReference type="PIRSF" id="PIRSF005901">
    <property type="entry name" value="EF-P"/>
    <property type="match status" value="1"/>
</dbReference>
<dbReference type="SMART" id="SM01185">
    <property type="entry name" value="EFP"/>
    <property type="match status" value="1"/>
</dbReference>
<dbReference type="SMART" id="SM00841">
    <property type="entry name" value="Elong-fact-P_C"/>
    <property type="match status" value="1"/>
</dbReference>
<dbReference type="SUPFAM" id="SSF50249">
    <property type="entry name" value="Nucleic acid-binding proteins"/>
    <property type="match status" value="2"/>
</dbReference>
<dbReference type="SUPFAM" id="SSF50104">
    <property type="entry name" value="Translation proteins SH3-like domain"/>
    <property type="match status" value="1"/>
</dbReference>
<dbReference type="PROSITE" id="PS01275">
    <property type="entry name" value="EFP"/>
    <property type="match status" value="1"/>
</dbReference>
<gene>
    <name evidence="1" type="primary">efp</name>
    <name type="ordered locus">Pmob_0011</name>
</gene>
<reference key="1">
    <citation type="submission" date="2007-11" db="EMBL/GenBank/DDBJ databases">
        <title>Complete sequence of Petroga mobilis SJ95.</title>
        <authorList>
            <consortium name="US DOE Joint Genome Institute"/>
            <person name="Copeland A."/>
            <person name="Lucas S."/>
            <person name="Lapidus A."/>
            <person name="Barry K."/>
            <person name="Glavina del Rio T."/>
            <person name="Dalin E."/>
            <person name="Tice H."/>
            <person name="Pitluck S."/>
            <person name="Meincke L."/>
            <person name="Brettin T."/>
            <person name="Bruce D."/>
            <person name="Detter J.C."/>
            <person name="Han C."/>
            <person name="Kuske C.R."/>
            <person name="Schmutz J."/>
            <person name="Larimer F."/>
            <person name="Land M."/>
            <person name="Hauser L."/>
            <person name="Kyrpides N."/>
            <person name="Mikhailova N."/>
            <person name="Noll K."/>
            <person name="Richardson P."/>
        </authorList>
    </citation>
    <scope>NUCLEOTIDE SEQUENCE [LARGE SCALE GENOMIC DNA]</scope>
    <source>
        <strain>DSM 10674 / SJ95</strain>
    </source>
</reference>
<sequence length="185" mass="21000">MIDVGDLRKGDMIVYQNEMYRVIEANKHFMGRGSGLIRTRLKSVITGLIKEVSFSSGEKVEEADISFRKAQYLYNDGDHYYFMLLDTYEQYSLPAQELEDEKFYLTENLEVDLIFFNGNPVSIQLPTVVVLTVIDTEPNFKGNTVSGGGKPATLETGLKTTVPFFVERGQKIKVDTRTGDYLERA</sequence>
<keyword id="KW-0963">Cytoplasm</keyword>
<keyword id="KW-0251">Elongation factor</keyword>
<keyword id="KW-0648">Protein biosynthesis</keyword>
<protein>
    <recommendedName>
        <fullName evidence="1">Elongation factor P</fullName>
        <shortName evidence="1">EF-P</shortName>
    </recommendedName>
</protein>
<accession>A9BEN2</accession>
<feature type="chain" id="PRO_1000076523" description="Elongation factor P">
    <location>
        <begin position="1"/>
        <end position="185"/>
    </location>
</feature>
<proteinExistence type="inferred from homology"/>
<evidence type="ECO:0000255" key="1">
    <source>
        <dbReference type="HAMAP-Rule" id="MF_00141"/>
    </source>
</evidence>
<organism>
    <name type="scientific">Petrotoga mobilis (strain DSM 10674 / SJ95)</name>
    <dbReference type="NCBI Taxonomy" id="403833"/>
    <lineage>
        <taxon>Bacteria</taxon>
        <taxon>Thermotogati</taxon>
        <taxon>Thermotogota</taxon>
        <taxon>Thermotogae</taxon>
        <taxon>Petrotogales</taxon>
        <taxon>Petrotogaceae</taxon>
        <taxon>Petrotoga</taxon>
    </lineage>
</organism>
<comment type="function">
    <text evidence="1">Involved in peptide bond synthesis. Stimulates efficient translation and peptide-bond synthesis on native or reconstituted 70S ribosomes in vitro. Probably functions indirectly by altering the affinity of the ribosome for aminoacyl-tRNA, thus increasing their reactivity as acceptors for peptidyl transferase.</text>
</comment>
<comment type="pathway">
    <text evidence="1">Protein biosynthesis; polypeptide chain elongation.</text>
</comment>
<comment type="subcellular location">
    <subcellularLocation>
        <location evidence="1">Cytoplasm</location>
    </subcellularLocation>
</comment>
<comment type="similarity">
    <text evidence="1">Belongs to the elongation factor P family.</text>
</comment>